<comment type="catalytic activity">
    <reaction>
        <text>ATP + H2O = ADP + phosphate + H(+)</text>
        <dbReference type="Rhea" id="RHEA:13065"/>
        <dbReference type="ChEBI" id="CHEBI:15377"/>
        <dbReference type="ChEBI" id="CHEBI:15378"/>
        <dbReference type="ChEBI" id="CHEBI:30616"/>
        <dbReference type="ChEBI" id="CHEBI:43474"/>
        <dbReference type="ChEBI" id="CHEBI:456216"/>
        <dbReference type="EC" id="3.6.4.13"/>
    </reaction>
</comment>
<comment type="subcellular location">
    <subcellularLocation>
        <location evidence="4">Plastid</location>
        <location evidence="4">Chloroplast</location>
    </subcellularLocation>
</comment>
<comment type="domain">
    <text>The Q motif is unique to and characteristic of the DEAD box family of RNA helicases and controls ATP binding and hydrolysis.</text>
</comment>
<comment type="similarity">
    <text evidence="4">Belongs to the DEAD box helicase family.</text>
</comment>
<comment type="sequence caution" evidence="4">
    <conflict type="erroneous gene model prediction">
        <sequence resource="EMBL-CDS" id="BAD87358"/>
    </conflict>
</comment>
<comment type="sequence caution" evidence="4">
    <conflict type="erroneous gene model prediction">
        <sequence resource="EMBL-CDS" id="BAF07441"/>
    </conflict>
</comment>
<feature type="transit peptide" description="Chloroplast" evidence="1">
    <location>
        <begin position="1"/>
        <end position="44"/>
    </location>
</feature>
<feature type="chain" id="PRO_0000282520" description="DEAD-box ATP-dependent RNA helicase 58, chloroplastic">
    <location>
        <begin position="45"/>
        <end position="438"/>
    </location>
</feature>
<feature type="domain" description="Helicase ATP-binding" evidence="2">
    <location>
        <begin position="72"/>
        <end position="245"/>
    </location>
</feature>
<feature type="domain" description="Helicase C-terminal" evidence="3">
    <location>
        <begin position="274"/>
        <end position="436"/>
    </location>
</feature>
<feature type="short sequence motif" description="Q motif">
    <location>
        <begin position="41"/>
        <end position="69"/>
    </location>
</feature>
<feature type="short sequence motif" description="DEAD box">
    <location>
        <begin position="190"/>
        <end position="193"/>
    </location>
</feature>
<feature type="binding site" evidence="2">
    <location>
        <begin position="85"/>
        <end position="92"/>
    </location>
    <ligand>
        <name>ATP</name>
        <dbReference type="ChEBI" id="CHEBI:30616"/>
    </ligand>
</feature>
<feature type="sequence conflict" description="In Ref. 6; CAD24774/CAD29781." evidence="4" ref="6">
    <original>V</original>
    <variation>G</variation>
    <location>
        <position position="313"/>
    </location>
</feature>
<feature type="sequence conflict" description="In Ref. 6; CAD24774/CAD29781." evidence="4" ref="6">
    <original>V</original>
    <variation>G</variation>
    <location>
        <position position="346"/>
    </location>
</feature>
<feature type="sequence conflict" description="In Ref. 6; CAD24774/CAD29781." evidence="4" ref="6">
    <original>G</original>
    <variation>S</variation>
    <location>
        <position position="350"/>
    </location>
</feature>
<reference key="1">
    <citation type="journal article" date="2002" name="Nature">
        <title>The genome sequence and structure of rice chromosome 1.</title>
        <authorList>
            <person name="Sasaki T."/>
            <person name="Matsumoto T."/>
            <person name="Yamamoto K."/>
            <person name="Sakata K."/>
            <person name="Baba T."/>
            <person name="Katayose Y."/>
            <person name="Wu J."/>
            <person name="Niimura Y."/>
            <person name="Cheng Z."/>
            <person name="Nagamura Y."/>
            <person name="Antonio B.A."/>
            <person name="Kanamori H."/>
            <person name="Hosokawa S."/>
            <person name="Masukawa M."/>
            <person name="Arikawa K."/>
            <person name="Chiden Y."/>
            <person name="Hayashi M."/>
            <person name="Okamoto M."/>
            <person name="Ando T."/>
            <person name="Aoki H."/>
            <person name="Arita K."/>
            <person name="Hamada M."/>
            <person name="Harada C."/>
            <person name="Hijishita S."/>
            <person name="Honda M."/>
            <person name="Ichikawa Y."/>
            <person name="Idonuma A."/>
            <person name="Iijima M."/>
            <person name="Ikeda M."/>
            <person name="Ikeno M."/>
            <person name="Ito S."/>
            <person name="Ito T."/>
            <person name="Ito Y."/>
            <person name="Ito Y."/>
            <person name="Iwabuchi A."/>
            <person name="Kamiya K."/>
            <person name="Karasawa W."/>
            <person name="Katagiri S."/>
            <person name="Kikuta A."/>
            <person name="Kobayashi N."/>
            <person name="Kono I."/>
            <person name="Machita K."/>
            <person name="Maehara T."/>
            <person name="Mizuno H."/>
            <person name="Mizubayashi T."/>
            <person name="Mukai Y."/>
            <person name="Nagasaki H."/>
            <person name="Nakashima M."/>
            <person name="Nakama Y."/>
            <person name="Nakamichi Y."/>
            <person name="Nakamura M."/>
            <person name="Namiki N."/>
            <person name="Negishi M."/>
            <person name="Ohta I."/>
            <person name="Ono N."/>
            <person name="Saji S."/>
            <person name="Sakai K."/>
            <person name="Shibata M."/>
            <person name="Shimokawa T."/>
            <person name="Shomura A."/>
            <person name="Song J."/>
            <person name="Takazaki Y."/>
            <person name="Terasawa K."/>
            <person name="Tsuji K."/>
            <person name="Waki K."/>
            <person name="Yamagata H."/>
            <person name="Yamane H."/>
            <person name="Yoshiki S."/>
            <person name="Yoshihara R."/>
            <person name="Yukawa K."/>
            <person name="Zhong H."/>
            <person name="Iwama H."/>
            <person name="Endo T."/>
            <person name="Ito H."/>
            <person name="Hahn J.H."/>
            <person name="Kim H.-I."/>
            <person name="Eun M.-Y."/>
            <person name="Yano M."/>
            <person name="Jiang J."/>
            <person name="Gojobori T."/>
        </authorList>
    </citation>
    <scope>NUCLEOTIDE SEQUENCE [LARGE SCALE GENOMIC DNA]</scope>
    <source>
        <strain>cv. Nipponbare</strain>
    </source>
</reference>
<reference key="2">
    <citation type="journal article" date="2005" name="Nature">
        <title>The map-based sequence of the rice genome.</title>
        <authorList>
            <consortium name="International rice genome sequencing project (IRGSP)"/>
        </authorList>
    </citation>
    <scope>NUCLEOTIDE SEQUENCE [LARGE SCALE GENOMIC DNA]</scope>
    <source>
        <strain>cv. Nipponbare</strain>
    </source>
</reference>
<reference key="3">
    <citation type="journal article" date="2008" name="Nucleic Acids Res.">
        <title>The rice annotation project database (RAP-DB): 2008 update.</title>
        <authorList>
            <consortium name="The rice annotation project (RAP)"/>
        </authorList>
    </citation>
    <scope>GENOME REANNOTATION</scope>
    <source>
        <strain>cv. Nipponbare</strain>
    </source>
</reference>
<reference key="4">
    <citation type="journal article" date="2013" name="Rice">
        <title>Improvement of the Oryza sativa Nipponbare reference genome using next generation sequence and optical map data.</title>
        <authorList>
            <person name="Kawahara Y."/>
            <person name="de la Bastide M."/>
            <person name="Hamilton J.P."/>
            <person name="Kanamori H."/>
            <person name="McCombie W.R."/>
            <person name="Ouyang S."/>
            <person name="Schwartz D.C."/>
            <person name="Tanaka T."/>
            <person name="Wu J."/>
            <person name="Zhou S."/>
            <person name="Childs K.L."/>
            <person name="Davidson R.M."/>
            <person name="Lin H."/>
            <person name="Quesada-Ocampo L."/>
            <person name="Vaillancourt B."/>
            <person name="Sakai H."/>
            <person name="Lee S.S."/>
            <person name="Kim J."/>
            <person name="Numa H."/>
            <person name="Itoh T."/>
            <person name="Buell C.R."/>
            <person name="Matsumoto T."/>
        </authorList>
    </citation>
    <scope>GENOME REANNOTATION</scope>
    <source>
        <strain>cv. Nipponbare</strain>
    </source>
</reference>
<reference key="5">
    <citation type="journal article" date="2005" name="PLoS Biol.">
        <title>The genomes of Oryza sativa: a history of duplications.</title>
        <authorList>
            <person name="Yu J."/>
            <person name="Wang J."/>
            <person name="Lin W."/>
            <person name="Li S."/>
            <person name="Li H."/>
            <person name="Zhou J."/>
            <person name="Ni P."/>
            <person name="Dong W."/>
            <person name="Hu S."/>
            <person name="Zeng C."/>
            <person name="Zhang J."/>
            <person name="Zhang Y."/>
            <person name="Li R."/>
            <person name="Xu Z."/>
            <person name="Li S."/>
            <person name="Li X."/>
            <person name="Zheng H."/>
            <person name="Cong L."/>
            <person name="Lin L."/>
            <person name="Yin J."/>
            <person name="Geng J."/>
            <person name="Li G."/>
            <person name="Shi J."/>
            <person name="Liu J."/>
            <person name="Lv H."/>
            <person name="Li J."/>
            <person name="Wang J."/>
            <person name="Deng Y."/>
            <person name="Ran L."/>
            <person name="Shi X."/>
            <person name="Wang X."/>
            <person name="Wu Q."/>
            <person name="Li C."/>
            <person name="Ren X."/>
            <person name="Wang J."/>
            <person name="Wang X."/>
            <person name="Li D."/>
            <person name="Liu D."/>
            <person name="Zhang X."/>
            <person name="Ji Z."/>
            <person name="Zhao W."/>
            <person name="Sun Y."/>
            <person name="Zhang Z."/>
            <person name="Bao J."/>
            <person name="Han Y."/>
            <person name="Dong L."/>
            <person name="Ji J."/>
            <person name="Chen P."/>
            <person name="Wu S."/>
            <person name="Liu J."/>
            <person name="Xiao Y."/>
            <person name="Bu D."/>
            <person name="Tan J."/>
            <person name="Yang L."/>
            <person name="Ye C."/>
            <person name="Zhang J."/>
            <person name="Xu J."/>
            <person name="Zhou Y."/>
            <person name="Yu Y."/>
            <person name="Zhang B."/>
            <person name="Zhuang S."/>
            <person name="Wei H."/>
            <person name="Liu B."/>
            <person name="Lei M."/>
            <person name="Yu H."/>
            <person name="Li Y."/>
            <person name="Xu H."/>
            <person name="Wei S."/>
            <person name="He X."/>
            <person name="Fang L."/>
            <person name="Zhang Z."/>
            <person name="Zhang Y."/>
            <person name="Huang X."/>
            <person name="Su Z."/>
            <person name="Tong W."/>
            <person name="Li J."/>
            <person name="Tong Z."/>
            <person name="Li S."/>
            <person name="Ye J."/>
            <person name="Wang L."/>
            <person name="Fang L."/>
            <person name="Lei T."/>
            <person name="Chen C.-S."/>
            <person name="Chen H.-C."/>
            <person name="Xu Z."/>
            <person name="Li H."/>
            <person name="Huang H."/>
            <person name="Zhang F."/>
            <person name="Xu H."/>
            <person name="Li N."/>
            <person name="Zhao C."/>
            <person name="Li S."/>
            <person name="Dong L."/>
            <person name="Huang Y."/>
            <person name="Li L."/>
            <person name="Xi Y."/>
            <person name="Qi Q."/>
            <person name="Li W."/>
            <person name="Zhang B."/>
            <person name="Hu W."/>
            <person name="Zhang Y."/>
            <person name="Tian X."/>
            <person name="Jiao Y."/>
            <person name="Liang X."/>
            <person name="Jin J."/>
            <person name="Gao L."/>
            <person name="Zheng W."/>
            <person name="Hao B."/>
            <person name="Liu S.-M."/>
            <person name="Wang W."/>
            <person name="Yuan L."/>
            <person name="Cao M."/>
            <person name="McDermott J."/>
            <person name="Samudrala R."/>
            <person name="Wang J."/>
            <person name="Wong G.K.-S."/>
            <person name="Yang H."/>
        </authorList>
    </citation>
    <scope>NUCLEOTIDE SEQUENCE [LARGE SCALE GENOMIC DNA]</scope>
    <source>
        <strain>cv. Nipponbare</strain>
    </source>
</reference>
<reference key="6">
    <citation type="journal article" date="2003" name="Cell Res.">
        <title>Identification of ABA-responsive genes in rice shoots via cDNA macroar-.</title>
        <authorList>
            <person name="Lin F."/>
            <person name="Xu S.L."/>
            <person name="Ni W.M."/>
            <person name="Chu Z.Q."/>
            <person name="Xu Z.H."/>
            <person name="Xue H.W."/>
        </authorList>
    </citation>
    <scope>NUCLEOTIDE SEQUENCE [MRNA] OF 143-353</scope>
</reference>
<accession>Q0JFN7</accession>
<accession>Q5JME9</accession>
<accession>Q5QT27</accession>
<dbReference type="EC" id="3.6.4.13"/>
<dbReference type="EMBL" id="AP003277">
    <property type="protein sequence ID" value="BAD87358.1"/>
    <property type="status" value="ALT_SEQ"/>
    <property type="molecule type" value="Genomic_DNA"/>
</dbReference>
<dbReference type="EMBL" id="AP008207">
    <property type="protein sequence ID" value="BAF07441.2"/>
    <property type="status" value="ALT_SEQ"/>
    <property type="molecule type" value="Genomic_DNA"/>
</dbReference>
<dbReference type="EMBL" id="AP014957">
    <property type="status" value="NOT_ANNOTATED_CDS"/>
    <property type="molecule type" value="Genomic_DNA"/>
</dbReference>
<dbReference type="EMBL" id="CM000144">
    <property type="status" value="NOT_ANNOTATED_CDS"/>
    <property type="molecule type" value="Genomic_DNA"/>
</dbReference>
<dbReference type="EMBL" id="AJ437263">
    <property type="protein sequence ID" value="CAD24774.1"/>
    <property type="molecule type" value="mRNA"/>
</dbReference>
<dbReference type="EMBL" id="AJ441303">
    <property type="protein sequence ID" value="CAD29781.1"/>
    <property type="molecule type" value="mRNA"/>
</dbReference>
<dbReference type="RefSeq" id="XP_015640675.1">
    <property type="nucleotide sequence ID" value="XM_015785189.1"/>
</dbReference>
<dbReference type="SMR" id="Q0JFN7"/>
<dbReference type="FunCoup" id="Q0JFN7">
    <property type="interactions" value="520"/>
</dbReference>
<dbReference type="STRING" id="39947.Q0JFN7"/>
<dbReference type="PaxDb" id="39947-Q0JFN7"/>
<dbReference type="EnsemblPlants" id="Os01t0970600-01">
    <property type="protein sequence ID" value="Os01t0970600-01"/>
    <property type="gene ID" value="Os01g0970600"/>
</dbReference>
<dbReference type="Gramene" id="Os01t0970600-01">
    <property type="protein sequence ID" value="Os01t0970600-01"/>
    <property type="gene ID" value="Os01g0970600"/>
</dbReference>
<dbReference type="KEGG" id="dosa:Os01g0970600"/>
<dbReference type="eggNOG" id="KOG0327">
    <property type="taxonomic scope" value="Eukaryota"/>
</dbReference>
<dbReference type="HOGENOM" id="CLU_003041_2_1_1"/>
<dbReference type="InParanoid" id="Q0JFN7"/>
<dbReference type="OrthoDB" id="10256233at2759"/>
<dbReference type="Proteomes" id="UP000000763">
    <property type="component" value="Chromosome 1"/>
</dbReference>
<dbReference type="Proteomes" id="UP000007752">
    <property type="component" value="Chromosome 7"/>
</dbReference>
<dbReference type="Proteomes" id="UP000059680">
    <property type="component" value="Chromosome 1"/>
</dbReference>
<dbReference type="GO" id="GO:0009507">
    <property type="term" value="C:chloroplast"/>
    <property type="evidence" value="ECO:0007669"/>
    <property type="project" value="UniProtKB-SubCell"/>
</dbReference>
<dbReference type="GO" id="GO:0005524">
    <property type="term" value="F:ATP binding"/>
    <property type="evidence" value="ECO:0007669"/>
    <property type="project" value="UniProtKB-KW"/>
</dbReference>
<dbReference type="GO" id="GO:0016887">
    <property type="term" value="F:ATP hydrolysis activity"/>
    <property type="evidence" value="ECO:0007669"/>
    <property type="project" value="RHEA"/>
</dbReference>
<dbReference type="GO" id="GO:0003729">
    <property type="term" value="F:mRNA binding"/>
    <property type="evidence" value="ECO:0000318"/>
    <property type="project" value="GO_Central"/>
</dbReference>
<dbReference type="GO" id="GO:0003724">
    <property type="term" value="F:RNA helicase activity"/>
    <property type="evidence" value="ECO:0000318"/>
    <property type="project" value="GO_Central"/>
</dbReference>
<dbReference type="CDD" id="cd00268">
    <property type="entry name" value="DEADc"/>
    <property type="match status" value="1"/>
</dbReference>
<dbReference type="CDD" id="cd18787">
    <property type="entry name" value="SF2_C_DEAD"/>
    <property type="match status" value="1"/>
</dbReference>
<dbReference type="Gene3D" id="3.40.50.300">
    <property type="entry name" value="P-loop containing nucleotide triphosphate hydrolases"/>
    <property type="match status" value="2"/>
</dbReference>
<dbReference type="InterPro" id="IPR011545">
    <property type="entry name" value="DEAD/DEAH_box_helicase_dom"/>
</dbReference>
<dbReference type="InterPro" id="IPR050547">
    <property type="entry name" value="DEAD_box_RNA_helicases"/>
</dbReference>
<dbReference type="InterPro" id="IPR014001">
    <property type="entry name" value="Helicase_ATP-bd"/>
</dbReference>
<dbReference type="InterPro" id="IPR001650">
    <property type="entry name" value="Helicase_C-like"/>
</dbReference>
<dbReference type="InterPro" id="IPR027417">
    <property type="entry name" value="P-loop_NTPase"/>
</dbReference>
<dbReference type="PANTHER" id="PTHR47963:SF10">
    <property type="entry name" value="ATP-DEPENDENT RNA HELICASE DDX6_DHH1"/>
    <property type="match status" value="1"/>
</dbReference>
<dbReference type="PANTHER" id="PTHR47963">
    <property type="entry name" value="DEAD-BOX ATP-DEPENDENT RNA HELICASE 47, MITOCHONDRIAL"/>
    <property type="match status" value="1"/>
</dbReference>
<dbReference type="Pfam" id="PF00270">
    <property type="entry name" value="DEAD"/>
    <property type="match status" value="1"/>
</dbReference>
<dbReference type="Pfam" id="PF00271">
    <property type="entry name" value="Helicase_C"/>
    <property type="match status" value="1"/>
</dbReference>
<dbReference type="SMART" id="SM00487">
    <property type="entry name" value="DEXDc"/>
    <property type="match status" value="1"/>
</dbReference>
<dbReference type="SMART" id="SM00490">
    <property type="entry name" value="HELICc"/>
    <property type="match status" value="1"/>
</dbReference>
<dbReference type="SUPFAM" id="SSF52540">
    <property type="entry name" value="P-loop containing nucleoside triphosphate hydrolases"/>
    <property type="match status" value="1"/>
</dbReference>
<dbReference type="PROSITE" id="PS51192">
    <property type="entry name" value="HELICASE_ATP_BIND_1"/>
    <property type="match status" value="1"/>
</dbReference>
<dbReference type="PROSITE" id="PS51194">
    <property type="entry name" value="HELICASE_CTER"/>
    <property type="match status" value="1"/>
</dbReference>
<dbReference type="PROSITE" id="PS51195">
    <property type="entry name" value="Q_MOTIF"/>
    <property type="match status" value="1"/>
</dbReference>
<organism>
    <name type="scientific">Oryza sativa subsp. japonica</name>
    <name type="common">Rice</name>
    <dbReference type="NCBI Taxonomy" id="39947"/>
    <lineage>
        <taxon>Eukaryota</taxon>
        <taxon>Viridiplantae</taxon>
        <taxon>Streptophyta</taxon>
        <taxon>Embryophyta</taxon>
        <taxon>Tracheophyta</taxon>
        <taxon>Spermatophyta</taxon>
        <taxon>Magnoliopsida</taxon>
        <taxon>Liliopsida</taxon>
        <taxon>Poales</taxon>
        <taxon>Poaceae</taxon>
        <taxon>BOP clade</taxon>
        <taxon>Oryzoideae</taxon>
        <taxon>Oryzeae</taxon>
        <taxon>Oryzinae</taxon>
        <taxon>Oryza</taxon>
        <taxon>Oryza sativa</taxon>
    </lineage>
</organism>
<keyword id="KW-0067">ATP-binding</keyword>
<keyword id="KW-0150">Chloroplast</keyword>
<keyword id="KW-0347">Helicase</keyword>
<keyword id="KW-0378">Hydrolase</keyword>
<keyword id="KW-0547">Nucleotide-binding</keyword>
<keyword id="KW-0934">Plastid</keyword>
<keyword id="KW-1185">Reference proteome</keyword>
<keyword id="KW-0694">RNA-binding</keyword>
<keyword id="KW-0809">Transit peptide</keyword>
<sequence>MAAFSGCASPLSTTLRSGLAPFTLRHRLRLRRLRASAATLREVCAGRVPEHVLQRAEEVGYVVPTEVQEQSLPVLLSGQDCILHAQTGSGKTLAYLLSVFSAIDFGRSSVQALVVVPTRELGMQVTKVARILAAKACTVMALLDGGMLRRQKSWVKAEPPAIIVATVASLCQMIEKRAFSLQSMRVLVIDEVDFIFGSSKQVSSLRKILTSYSAASSRQTIFASASIPQHNRFVHDCVQHKWTKTDVVHVHVNPVQPMPSHLQHKYAICSKKERLHVLLSLLEKDAPKSGIIFVAEQSEKSKKAGHPPSTTVVVEFLRTTYMGSLEVLLLEEDMNFNARATSFTEVKGKGFLLVSTDIASRGFDLPQTSHIYNFDLPKTAIDYLHRAGRTGREPFSKLACSVTTLITEDEHFVLQRFQNELKFHCEELPVESMFAFNL</sequence>
<protein>
    <recommendedName>
        <fullName>DEAD-box ATP-dependent RNA helicase 58, chloroplastic</fullName>
        <ecNumber>3.6.4.13</ecNumber>
    </recommendedName>
</protein>
<gene>
    <name type="ordered locus">Os01g0970600</name>
    <name type="ordered locus">LOC_Os01g73900</name>
    <name type="ORF">OsJ_024578</name>
    <name type="ORF">P0518C01.3</name>
</gene>
<proteinExistence type="evidence at transcript level"/>
<evidence type="ECO:0000255" key="1"/>
<evidence type="ECO:0000255" key="2">
    <source>
        <dbReference type="PROSITE-ProRule" id="PRU00541"/>
    </source>
</evidence>
<evidence type="ECO:0000255" key="3">
    <source>
        <dbReference type="PROSITE-ProRule" id="PRU00542"/>
    </source>
</evidence>
<evidence type="ECO:0000305" key="4"/>
<name>RH58_ORYSJ</name>